<name>RUVV_FOWPN</name>
<evidence type="ECO:0000250" key="1"/>
<evidence type="ECO:0000305" key="2"/>
<evidence type="ECO:0007829" key="3">
    <source>
        <dbReference type="PDB" id="6P7A"/>
    </source>
</evidence>
<evidence type="ECO:0007829" key="4">
    <source>
        <dbReference type="PDB" id="6P7B"/>
    </source>
</evidence>
<accession>Q9J546</accession>
<feature type="chain" id="PRO_0000183159" description="Holliday junction resolvase">
    <location>
        <begin position="1"/>
        <end position="156"/>
    </location>
</feature>
<feature type="strand" evidence="3">
    <location>
        <begin position="2"/>
        <end position="7"/>
    </location>
</feature>
<feature type="strand" evidence="3">
    <location>
        <begin position="10"/>
        <end position="12"/>
    </location>
</feature>
<feature type="strand" evidence="3">
    <location>
        <begin position="14"/>
        <end position="21"/>
    </location>
</feature>
<feature type="turn" evidence="3">
    <location>
        <begin position="22"/>
        <end position="25"/>
    </location>
</feature>
<feature type="strand" evidence="3">
    <location>
        <begin position="26"/>
        <end position="34"/>
    </location>
</feature>
<feature type="strand" evidence="4">
    <location>
        <begin position="38"/>
        <end position="40"/>
    </location>
</feature>
<feature type="helix" evidence="3">
    <location>
        <begin position="41"/>
        <end position="50"/>
    </location>
</feature>
<feature type="strand" evidence="3">
    <location>
        <begin position="55"/>
        <end position="60"/>
    </location>
</feature>
<feature type="strand" evidence="4">
    <location>
        <begin position="64"/>
        <end position="66"/>
    </location>
</feature>
<feature type="helix" evidence="3">
    <location>
        <begin position="69"/>
        <end position="78"/>
    </location>
</feature>
<feature type="turn" evidence="3">
    <location>
        <begin position="79"/>
        <end position="81"/>
    </location>
</feature>
<feature type="strand" evidence="3">
    <location>
        <begin position="85"/>
        <end position="89"/>
    </location>
</feature>
<feature type="helix" evidence="3">
    <location>
        <begin position="98"/>
        <end position="112"/>
    </location>
</feature>
<feature type="helix" evidence="3">
    <location>
        <begin position="114"/>
        <end position="117"/>
    </location>
</feature>
<feature type="helix" evidence="3">
    <location>
        <begin position="120"/>
        <end position="126"/>
    </location>
</feature>
<feature type="helix" evidence="3">
    <location>
        <begin position="131"/>
        <end position="146"/>
    </location>
</feature>
<comment type="function">
    <text evidence="1">Nuclease that specifically cleaves and resolves four-way DNA Holliday junctions into linear duplex products.</text>
</comment>
<comment type="cofactor">
    <cofactor evidence="1">
        <name>Mg(2+)</name>
        <dbReference type="ChEBI" id="CHEBI:18420"/>
    </cofactor>
    <text evidence="1">Binds 1 Mg(2+) ion per subunit.</text>
</comment>
<comment type="similarity">
    <text evidence="2">Belongs to the RuvC family. Poxviruses-type subfamily.</text>
</comment>
<keyword id="KW-0002">3D-structure</keyword>
<keyword id="KW-0227">DNA damage</keyword>
<keyword id="KW-0233">DNA recombination</keyword>
<keyword id="KW-0234">DNA repair</keyword>
<keyword id="KW-0378">Hydrolase</keyword>
<keyword id="KW-0460">Magnesium</keyword>
<keyword id="KW-0540">Nuclease</keyword>
<keyword id="KW-1185">Reference proteome</keyword>
<dbReference type="EC" id="3.1.-.-"/>
<dbReference type="EMBL" id="AF198100">
    <property type="protein sequence ID" value="AAF44531.1"/>
    <property type="molecule type" value="Genomic_DNA"/>
</dbReference>
<dbReference type="RefSeq" id="NP_039150.1">
    <property type="nucleotide sequence ID" value="NC_002188.1"/>
</dbReference>
<dbReference type="PDB" id="6P7A">
    <property type="method" value="X-ray"/>
    <property type="resolution" value="3.08 A"/>
    <property type="chains" value="A/B=1-148"/>
</dbReference>
<dbReference type="PDB" id="6P7B">
    <property type="method" value="X-ray"/>
    <property type="resolution" value="3.32 A"/>
    <property type="chains" value="A/B/C/D=1-149"/>
</dbReference>
<dbReference type="PDBsum" id="6P7A"/>
<dbReference type="PDBsum" id="6P7B"/>
<dbReference type="BMRB" id="Q9J546"/>
<dbReference type="SMR" id="Q9J546"/>
<dbReference type="GeneID" id="1486759"/>
<dbReference type="KEGG" id="vg:1486759"/>
<dbReference type="Proteomes" id="UP000008597">
    <property type="component" value="Segment"/>
</dbReference>
<dbReference type="GO" id="GO:0008821">
    <property type="term" value="F:crossover junction DNA endonuclease activity"/>
    <property type="evidence" value="ECO:0000314"/>
    <property type="project" value="CACAO"/>
</dbReference>
<dbReference type="GO" id="GO:0000400">
    <property type="term" value="F:four-way junction DNA binding"/>
    <property type="evidence" value="ECO:0007669"/>
    <property type="project" value="InterPro"/>
</dbReference>
<dbReference type="GO" id="GO:0000287">
    <property type="term" value="F:magnesium ion binding"/>
    <property type="evidence" value="ECO:0007669"/>
    <property type="project" value="InterPro"/>
</dbReference>
<dbReference type="GO" id="GO:0006310">
    <property type="term" value="P:DNA recombination"/>
    <property type="evidence" value="ECO:0007669"/>
    <property type="project" value="UniProtKB-KW"/>
</dbReference>
<dbReference type="GO" id="GO:0006281">
    <property type="term" value="P:DNA repair"/>
    <property type="evidence" value="ECO:0007669"/>
    <property type="project" value="UniProtKB-KW"/>
</dbReference>
<dbReference type="Gene3D" id="3.30.420.10">
    <property type="entry name" value="Ribonuclease H-like superfamily/Ribonuclease H"/>
    <property type="match status" value="1"/>
</dbReference>
<dbReference type="InterPro" id="IPR006932">
    <property type="entry name" value="HJ-resolvase_A22"/>
</dbReference>
<dbReference type="InterPro" id="IPR012337">
    <property type="entry name" value="RNaseH-like_sf"/>
</dbReference>
<dbReference type="InterPro" id="IPR036397">
    <property type="entry name" value="RNaseH_sf"/>
</dbReference>
<dbReference type="Pfam" id="PF04848">
    <property type="entry name" value="Pox_A22"/>
    <property type="match status" value="1"/>
</dbReference>
<dbReference type="SUPFAM" id="SSF53098">
    <property type="entry name" value="Ribonuclease H-like"/>
    <property type="match status" value="1"/>
</dbReference>
<protein>
    <recommendedName>
        <fullName>Holliday junction resolvase</fullName>
        <ecNumber>3.1.-.-</ecNumber>
    </recommendedName>
</protein>
<organismHost>
    <name type="scientific">Vertebrata</name>
    <dbReference type="NCBI Taxonomy" id="7742"/>
</organismHost>
<proteinExistence type="evidence at protein level"/>
<sequence length="156" mass="18154">MIICSVDIGIKNPAYAIFNYDNTSNTIKLIAIEKSDWTKNWERSVARDLTRYNPDVVILEKQGFKSPNSKIIYFIKGFFYNSNTKVIVRNPTFKGGSYRNRKKQSIDVFIQKISEYTDYKNDILNKYTKLDDIADSFNLGLSYMESLLKKCKISKD</sequence>
<gene>
    <name type="ordered locus">FPV187</name>
</gene>
<reference key="1">
    <citation type="journal article" date="2000" name="J. Virol.">
        <title>The genome of fowlpox virus.</title>
        <authorList>
            <person name="Afonso C.L."/>
            <person name="Tulman E.R."/>
            <person name="Lu Z."/>
            <person name="Zsak L."/>
            <person name="Kutish G.F."/>
            <person name="Rock D.L."/>
        </authorList>
    </citation>
    <scope>NUCLEOTIDE SEQUENCE [LARGE SCALE GENOMIC DNA]</scope>
</reference>
<organism>
    <name type="scientific">Fowlpox virus (strain NVSL)</name>
    <name type="common">FPV</name>
    <dbReference type="NCBI Taxonomy" id="928301"/>
    <lineage>
        <taxon>Viruses</taxon>
        <taxon>Varidnaviria</taxon>
        <taxon>Bamfordvirae</taxon>
        <taxon>Nucleocytoviricota</taxon>
        <taxon>Pokkesviricetes</taxon>
        <taxon>Chitovirales</taxon>
        <taxon>Poxviridae</taxon>
        <taxon>Chordopoxvirinae</taxon>
        <taxon>Avipoxvirus</taxon>
        <taxon>Fowlpox virus</taxon>
    </lineage>
</organism>